<gene>
    <name evidence="4" type="primary">CYP726A27</name>
</gene>
<dbReference type="EC" id="1.14.14.-" evidence="3"/>
<dbReference type="EMBL" id="KR350669">
    <property type="protein sequence ID" value="AMY98419.1"/>
    <property type="molecule type" value="mRNA"/>
</dbReference>
<dbReference type="SMR" id="A0A161GJD5"/>
<dbReference type="UniPathway" id="UPA00213"/>
<dbReference type="GO" id="GO:0016020">
    <property type="term" value="C:membrane"/>
    <property type="evidence" value="ECO:0007669"/>
    <property type="project" value="UniProtKB-SubCell"/>
</dbReference>
<dbReference type="GO" id="GO:0020037">
    <property type="term" value="F:heme binding"/>
    <property type="evidence" value="ECO:0007669"/>
    <property type="project" value="InterPro"/>
</dbReference>
<dbReference type="GO" id="GO:0005506">
    <property type="term" value="F:iron ion binding"/>
    <property type="evidence" value="ECO:0007669"/>
    <property type="project" value="InterPro"/>
</dbReference>
<dbReference type="GO" id="GO:0004497">
    <property type="term" value="F:monooxygenase activity"/>
    <property type="evidence" value="ECO:0007669"/>
    <property type="project" value="UniProtKB-KW"/>
</dbReference>
<dbReference type="GO" id="GO:0016705">
    <property type="term" value="F:oxidoreductase activity, acting on paired donors, with incorporation or reduction of molecular oxygen"/>
    <property type="evidence" value="ECO:0007669"/>
    <property type="project" value="InterPro"/>
</dbReference>
<dbReference type="GO" id="GO:0016114">
    <property type="term" value="P:terpenoid biosynthetic process"/>
    <property type="evidence" value="ECO:0007669"/>
    <property type="project" value="UniProtKB-UniPathway"/>
</dbReference>
<dbReference type="CDD" id="cd11072">
    <property type="entry name" value="CYP71-like"/>
    <property type="match status" value="1"/>
</dbReference>
<dbReference type="FunFam" id="1.10.630.10:FF:000043">
    <property type="entry name" value="Cytochrome P450 99A2"/>
    <property type="match status" value="1"/>
</dbReference>
<dbReference type="Gene3D" id="1.10.630.10">
    <property type="entry name" value="Cytochrome P450"/>
    <property type="match status" value="1"/>
</dbReference>
<dbReference type="InterPro" id="IPR052306">
    <property type="entry name" value="CYP450_71D"/>
</dbReference>
<dbReference type="InterPro" id="IPR001128">
    <property type="entry name" value="Cyt_P450"/>
</dbReference>
<dbReference type="InterPro" id="IPR017972">
    <property type="entry name" value="Cyt_P450_CS"/>
</dbReference>
<dbReference type="InterPro" id="IPR002401">
    <property type="entry name" value="Cyt_P450_E_grp-I"/>
</dbReference>
<dbReference type="InterPro" id="IPR036396">
    <property type="entry name" value="Cyt_P450_sf"/>
</dbReference>
<dbReference type="PANTHER" id="PTHR47953:SF19">
    <property type="entry name" value="OS06G0641600 PROTEIN"/>
    <property type="match status" value="1"/>
</dbReference>
<dbReference type="PANTHER" id="PTHR47953">
    <property type="entry name" value="OS08G0105600 PROTEIN"/>
    <property type="match status" value="1"/>
</dbReference>
<dbReference type="Pfam" id="PF00067">
    <property type="entry name" value="p450"/>
    <property type="match status" value="1"/>
</dbReference>
<dbReference type="PRINTS" id="PR00463">
    <property type="entry name" value="EP450I"/>
</dbReference>
<dbReference type="PRINTS" id="PR00385">
    <property type="entry name" value="P450"/>
</dbReference>
<dbReference type="SUPFAM" id="SSF48264">
    <property type="entry name" value="Cytochrome P450"/>
    <property type="match status" value="1"/>
</dbReference>
<dbReference type="PROSITE" id="PS00086">
    <property type="entry name" value="CYTOCHROME_P450"/>
    <property type="match status" value="1"/>
</dbReference>
<organism>
    <name type="scientific">Euphorbia lathyris</name>
    <name type="common">Caper spurge</name>
    <dbReference type="NCBI Taxonomy" id="212925"/>
    <lineage>
        <taxon>Eukaryota</taxon>
        <taxon>Viridiplantae</taxon>
        <taxon>Streptophyta</taxon>
        <taxon>Embryophyta</taxon>
        <taxon>Tracheophyta</taxon>
        <taxon>Spermatophyta</taxon>
        <taxon>Magnoliopsida</taxon>
        <taxon>eudicotyledons</taxon>
        <taxon>Gunneridae</taxon>
        <taxon>Pentapetalae</taxon>
        <taxon>rosids</taxon>
        <taxon>fabids</taxon>
        <taxon>Malpighiales</taxon>
        <taxon>Euphorbiaceae</taxon>
        <taxon>Euphorbioideae</taxon>
        <taxon>Euphorbieae</taxon>
        <taxon>Euphorbia</taxon>
        <taxon>Euphorbia subgen. Esula</taxon>
        <taxon>Euphorbia sect. Lathyris</taxon>
    </lineage>
</organism>
<proteinExistence type="evidence at protein level"/>
<name>C7A27_EUPLT</name>
<keyword id="KW-0349">Heme</keyword>
<keyword id="KW-0408">Iron</keyword>
<keyword id="KW-0472">Membrane</keyword>
<keyword id="KW-0479">Metal-binding</keyword>
<keyword id="KW-0503">Monooxygenase</keyword>
<keyword id="KW-0560">Oxidoreductase</keyword>
<keyword id="KW-0735">Signal-anchor</keyword>
<keyword id="KW-0812">Transmembrane</keyword>
<keyword id="KW-1133">Transmembrane helix</keyword>
<protein>
    <recommendedName>
        <fullName evidence="4">Cytochrome P450 726A27</fullName>
        <shortName evidence="4">ElCYP726A27</shortName>
    </recommendedName>
    <alternativeName>
        <fullName evidence="6">4,5,8-trihydroxycasbene synthase</fullName>
        <ecNumber evidence="3">1.14.14.-</ecNumber>
    </alternativeName>
    <alternativeName>
        <fullName evidence="6">4,8-dihydroxycasbene synthase</fullName>
        <ecNumber evidence="3">1.14.14.-</ecNumber>
    </alternativeName>
    <alternativeName>
        <fullName evidence="6">4-hydroxycasbene synthase</fullName>
        <ecNumber evidence="3">1.14.14.-</ecNumber>
    </alternativeName>
</protein>
<evidence type="ECO:0000250" key="1">
    <source>
        <dbReference type="UniProtKB" id="Q96242"/>
    </source>
</evidence>
<evidence type="ECO:0000255" key="2"/>
<evidence type="ECO:0000269" key="3">
    <source>
    </source>
</evidence>
<evidence type="ECO:0000303" key="4">
    <source>
    </source>
</evidence>
<evidence type="ECO:0000305" key="5"/>
<evidence type="ECO:0000305" key="6">
    <source>
    </source>
</evidence>
<reference key="1">
    <citation type="journal article" date="2016" name="Proc. Natl. Acad. Sci. U.S.A.">
        <title>Oxidation and cyclization of casbene in the biosynthesis of Euphorbia factors from mature seeds of Euphorbia lathyris L.</title>
        <authorList>
            <person name="Luo D."/>
            <person name="Callari R."/>
            <person name="Hamberger B."/>
            <person name="Wubshet S.G."/>
            <person name="Nielsen M.T."/>
            <person name="Andersen-Ranberg J."/>
            <person name="Hallstroem B.M."/>
            <person name="Cozzi F."/>
            <person name="Heider H."/>
            <person name="Lindberg Moeller B."/>
            <person name="Staerk D."/>
            <person name="Hamberger B."/>
        </authorList>
    </citation>
    <scope>NUCLEOTIDE SEQUENCE [MRNA]</scope>
    <scope>FUNCTION</scope>
    <scope>CATALYTIC ACTIVITY</scope>
    <scope>PATHWAY</scope>
    <scope>TISSUE SPECIFICITY</scope>
    <source>
        <tissue>Seed</tissue>
    </source>
</reference>
<feature type="chain" id="PRO_0000453168" description="Cytochrome P450 726A27">
    <location>
        <begin position="1"/>
        <end position="500"/>
    </location>
</feature>
<feature type="transmembrane region" description="Helical; Signal-anchor for type II membrane protein" evidence="2">
    <location>
        <begin position="7"/>
        <end position="27"/>
    </location>
</feature>
<feature type="binding site" description="axial binding residue" evidence="1">
    <location>
        <position position="440"/>
    </location>
    <ligand>
        <name>heme</name>
        <dbReference type="ChEBI" id="CHEBI:30413"/>
    </ligand>
    <ligandPart>
        <name>Fe</name>
        <dbReference type="ChEBI" id="CHEBI:18248"/>
    </ligandPart>
</feature>
<accession>A0A161GJD5</accession>
<comment type="function">
    <text evidence="3">Involved in the biosynthesis of macrocyclic lathyrane type diterpenoids (also called Euphorbia factors) natural products, including the cyclization route from casbene to jolkinol C, a precursor for ingenol mebutate that is used to treat actinic keratosis, a precancerous skin condition (PubMed:27506796). Catalyzes the hydroxylation of (-)-casbene and 8-hydroxycasbene to produce 4-hydroxycasbene and 4,8-dihydroxycasbene, respectively (PubMed:27506796).</text>
</comment>
<comment type="catalytic activity">
    <reaction evidence="3">
        <text>(-)-casbene + reduced [NADPH--hemoprotein reductase] + O2 = 4-hydroxycasbene + oxidized [NADPH--hemoprotein reductase] + H2O + H(+)</text>
        <dbReference type="Rhea" id="RHEA:65588"/>
        <dbReference type="Rhea" id="RHEA-COMP:11964"/>
        <dbReference type="Rhea" id="RHEA-COMP:11965"/>
        <dbReference type="ChEBI" id="CHEBI:15377"/>
        <dbReference type="ChEBI" id="CHEBI:15378"/>
        <dbReference type="ChEBI" id="CHEBI:15379"/>
        <dbReference type="ChEBI" id="CHEBI:57618"/>
        <dbReference type="ChEBI" id="CHEBI:58210"/>
        <dbReference type="ChEBI" id="CHEBI:156578"/>
        <dbReference type="ChEBI" id="CHEBI:157595"/>
    </reaction>
    <physiologicalReaction direction="left-to-right" evidence="3">
        <dbReference type="Rhea" id="RHEA:65589"/>
    </physiologicalReaction>
</comment>
<comment type="catalytic activity">
    <reaction evidence="3">
        <text>8-hydroxycasbene + reduced [NADPH--hemoprotein reductase] + O2 = 4,8-dihydroxycasbene + oxidized [NADPH--hemoprotein reductase] + H2O + H(+)</text>
        <dbReference type="Rhea" id="RHEA:65592"/>
        <dbReference type="Rhea" id="RHEA-COMP:11964"/>
        <dbReference type="Rhea" id="RHEA-COMP:11965"/>
        <dbReference type="ChEBI" id="CHEBI:15377"/>
        <dbReference type="ChEBI" id="CHEBI:15378"/>
        <dbReference type="ChEBI" id="CHEBI:15379"/>
        <dbReference type="ChEBI" id="CHEBI:57618"/>
        <dbReference type="ChEBI" id="CHEBI:58210"/>
        <dbReference type="ChEBI" id="CHEBI:157600"/>
        <dbReference type="ChEBI" id="CHEBI:157601"/>
    </reaction>
    <physiologicalReaction direction="left-to-right" evidence="3">
        <dbReference type="Rhea" id="RHEA:65593"/>
    </physiologicalReaction>
</comment>
<comment type="catalytic activity">
    <reaction evidence="3">
        <text>4,8-dihydroxycasbene + reduced [NADPH--hemoprotein reductase] + O2 = 4,5,8-trihydroxycasbene + oxidized [NADPH--hemoprotein reductase] + H2O + H(+)</text>
        <dbReference type="Rhea" id="RHEA:67032"/>
        <dbReference type="Rhea" id="RHEA-COMP:11964"/>
        <dbReference type="Rhea" id="RHEA-COMP:11965"/>
        <dbReference type="ChEBI" id="CHEBI:15377"/>
        <dbReference type="ChEBI" id="CHEBI:15378"/>
        <dbReference type="ChEBI" id="CHEBI:15379"/>
        <dbReference type="ChEBI" id="CHEBI:57618"/>
        <dbReference type="ChEBI" id="CHEBI:58210"/>
        <dbReference type="ChEBI" id="CHEBI:157601"/>
        <dbReference type="ChEBI" id="CHEBI:157602"/>
    </reaction>
    <physiologicalReaction direction="left-to-right" evidence="3">
        <dbReference type="Rhea" id="RHEA:67033"/>
    </physiologicalReaction>
</comment>
<comment type="cofactor">
    <cofactor evidence="1">
        <name>heme</name>
        <dbReference type="ChEBI" id="CHEBI:30413"/>
    </cofactor>
</comment>
<comment type="pathway">
    <text evidence="3">Secondary metabolite biosynthesis; terpenoid biosynthesis.</text>
</comment>
<comment type="subcellular location">
    <subcellularLocation>
        <location evidence="2">Membrane</location>
        <topology evidence="5">Single-pass type II membrane protein</topology>
    </subcellularLocation>
</comment>
<comment type="tissue specificity">
    <text evidence="3">Expressed in mature seeds.</text>
</comment>
<comment type="similarity">
    <text evidence="5">Belongs to the cytochrome P450 family.</text>
</comment>
<sequence>MDLQLQIPSYPIIFSFFIFIFMLIKIWKKQTQTSIFPPGPFKFPIVGNIPQLATGGTLPHHRLRDLAKIYGPIMTIQLGQVKSVVISSPETAKEVLKTQDIQFADRPLLLAGEMVLYNRKDILYGTYGDQWRQMRKICTLELLSAKRIQSFKSVREKEVESFIKTLRSKSGIPVNLTNAVFELTNTIMMITTIGQKCKNQEAVMSVIDRVSEAAAGFSVADVFPSLKFLHYLSGEKTKLQKLHKETDQILEEIISEHKANAKVGAQADNLLDVLLDLQKNGNLQVPLTNDNIKAATLEMFGAGSDTSSKTTDWAMAQMMRKPTTMKKAQEEVRRVFGENGKVEESRIQELKYLKLVVKETLRLHPAVALIPRECREKTKIDGFDIYPKTKILVNPWAIGRDPKVWNEPESFNPERFQDSPIDYKGTNFELIPFGAGKRICPGMTLGITNLELFLANLLYHFDWKFPDGITSENLDMTEAIGGAIKRKLDLELISIPYTSS</sequence>